<dbReference type="EC" id="5.6.1.7" evidence="1"/>
<dbReference type="EMBL" id="CP000738">
    <property type="protein sequence ID" value="ABR60131.1"/>
    <property type="molecule type" value="Genomic_DNA"/>
</dbReference>
<dbReference type="RefSeq" id="YP_001326966.1">
    <property type="nucleotide sequence ID" value="NC_009636.1"/>
</dbReference>
<dbReference type="SMR" id="A6U901"/>
<dbReference type="STRING" id="366394.Smed_1281"/>
<dbReference type="KEGG" id="smd:Smed_1281"/>
<dbReference type="PATRIC" id="fig|366394.8.peg.4417"/>
<dbReference type="eggNOG" id="COG0459">
    <property type="taxonomic scope" value="Bacteria"/>
</dbReference>
<dbReference type="HOGENOM" id="CLU_016503_3_0_5"/>
<dbReference type="OrthoDB" id="9766614at2"/>
<dbReference type="Proteomes" id="UP000001108">
    <property type="component" value="Chromosome"/>
</dbReference>
<dbReference type="GO" id="GO:0005737">
    <property type="term" value="C:cytoplasm"/>
    <property type="evidence" value="ECO:0007669"/>
    <property type="project" value="UniProtKB-SubCell"/>
</dbReference>
<dbReference type="GO" id="GO:0005524">
    <property type="term" value="F:ATP binding"/>
    <property type="evidence" value="ECO:0007669"/>
    <property type="project" value="UniProtKB-UniRule"/>
</dbReference>
<dbReference type="GO" id="GO:0140662">
    <property type="term" value="F:ATP-dependent protein folding chaperone"/>
    <property type="evidence" value="ECO:0007669"/>
    <property type="project" value="InterPro"/>
</dbReference>
<dbReference type="GO" id="GO:0016853">
    <property type="term" value="F:isomerase activity"/>
    <property type="evidence" value="ECO:0007669"/>
    <property type="project" value="UniProtKB-KW"/>
</dbReference>
<dbReference type="GO" id="GO:0051082">
    <property type="term" value="F:unfolded protein binding"/>
    <property type="evidence" value="ECO:0007669"/>
    <property type="project" value="UniProtKB-UniRule"/>
</dbReference>
<dbReference type="GO" id="GO:0042026">
    <property type="term" value="P:protein refolding"/>
    <property type="evidence" value="ECO:0007669"/>
    <property type="project" value="UniProtKB-UniRule"/>
</dbReference>
<dbReference type="CDD" id="cd03344">
    <property type="entry name" value="GroEL"/>
    <property type="match status" value="1"/>
</dbReference>
<dbReference type="FunFam" id="1.10.560.10:FF:000001">
    <property type="entry name" value="60 kDa chaperonin"/>
    <property type="match status" value="1"/>
</dbReference>
<dbReference type="FunFam" id="3.50.7.10:FF:000001">
    <property type="entry name" value="60 kDa chaperonin"/>
    <property type="match status" value="1"/>
</dbReference>
<dbReference type="Gene3D" id="3.50.7.10">
    <property type="entry name" value="GroEL"/>
    <property type="match status" value="1"/>
</dbReference>
<dbReference type="Gene3D" id="1.10.560.10">
    <property type="entry name" value="GroEL-like equatorial domain"/>
    <property type="match status" value="1"/>
</dbReference>
<dbReference type="Gene3D" id="3.30.260.10">
    <property type="entry name" value="TCP-1-like chaperonin intermediate domain"/>
    <property type="match status" value="1"/>
</dbReference>
<dbReference type="HAMAP" id="MF_00600">
    <property type="entry name" value="CH60"/>
    <property type="match status" value="1"/>
</dbReference>
<dbReference type="InterPro" id="IPR018370">
    <property type="entry name" value="Chaperonin_Cpn60_CS"/>
</dbReference>
<dbReference type="InterPro" id="IPR001844">
    <property type="entry name" value="Cpn60/GroEL"/>
</dbReference>
<dbReference type="InterPro" id="IPR002423">
    <property type="entry name" value="Cpn60/GroEL/TCP-1"/>
</dbReference>
<dbReference type="InterPro" id="IPR027409">
    <property type="entry name" value="GroEL-like_apical_dom_sf"/>
</dbReference>
<dbReference type="InterPro" id="IPR027413">
    <property type="entry name" value="GROEL-like_equatorial_sf"/>
</dbReference>
<dbReference type="InterPro" id="IPR027410">
    <property type="entry name" value="TCP-1-like_intermed_sf"/>
</dbReference>
<dbReference type="NCBIfam" id="TIGR02348">
    <property type="entry name" value="GroEL"/>
    <property type="match status" value="1"/>
</dbReference>
<dbReference type="NCBIfam" id="NF000592">
    <property type="entry name" value="PRK00013.1"/>
    <property type="match status" value="1"/>
</dbReference>
<dbReference type="NCBIfam" id="NF009487">
    <property type="entry name" value="PRK12849.1"/>
    <property type="match status" value="1"/>
</dbReference>
<dbReference type="NCBIfam" id="NF009488">
    <property type="entry name" value="PRK12850.1"/>
    <property type="match status" value="1"/>
</dbReference>
<dbReference type="NCBIfam" id="NF009489">
    <property type="entry name" value="PRK12851.1"/>
    <property type="match status" value="1"/>
</dbReference>
<dbReference type="PANTHER" id="PTHR45633">
    <property type="entry name" value="60 KDA HEAT SHOCK PROTEIN, MITOCHONDRIAL"/>
    <property type="match status" value="1"/>
</dbReference>
<dbReference type="Pfam" id="PF00118">
    <property type="entry name" value="Cpn60_TCP1"/>
    <property type="match status" value="1"/>
</dbReference>
<dbReference type="PRINTS" id="PR00298">
    <property type="entry name" value="CHAPERONIN60"/>
</dbReference>
<dbReference type="SUPFAM" id="SSF52029">
    <property type="entry name" value="GroEL apical domain-like"/>
    <property type="match status" value="1"/>
</dbReference>
<dbReference type="SUPFAM" id="SSF48592">
    <property type="entry name" value="GroEL equatorial domain-like"/>
    <property type="match status" value="1"/>
</dbReference>
<dbReference type="SUPFAM" id="SSF54849">
    <property type="entry name" value="GroEL-intermediate domain like"/>
    <property type="match status" value="1"/>
</dbReference>
<dbReference type="PROSITE" id="PS00296">
    <property type="entry name" value="CHAPERONINS_CPN60"/>
    <property type="match status" value="1"/>
</dbReference>
<keyword id="KW-0067">ATP-binding</keyword>
<keyword id="KW-0143">Chaperone</keyword>
<keyword id="KW-0963">Cytoplasm</keyword>
<keyword id="KW-0413">Isomerase</keyword>
<keyword id="KW-0547">Nucleotide-binding</keyword>
<protein>
    <recommendedName>
        <fullName evidence="1">Chaperonin GroEL 3</fullName>
        <ecNumber evidence="1">5.6.1.7</ecNumber>
    </recommendedName>
    <alternativeName>
        <fullName evidence="1">60 kDa chaperonin 3</fullName>
    </alternativeName>
    <alternativeName>
        <fullName evidence="1">Chaperonin-60 3</fullName>
        <shortName evidence="1">Cpn60 3</shortName>
    </alternativeName>
</protein>
<feature type="chain" id="PRO_0000332085" description="Chaperonin GroEL 3">
    <location>
        <begin position="1"/>
        <end position="542"/>
    </location>
</feature>
<feature type="binding site" evidence="1">
    <location>
        <begin position="30"/>
        <end position="33"/>
    </location>
    <ligand>
        <name>ATP</name>
        <dbReference type="ChEBI" id="CHEBI:30616"/>
    </ligand>
</feature>
<feature type="binding site" evidence="1">
    <location>
        <position position="51"/>
    </location>
    <ligand>
        <name>ATP</name>
        <dbReference type="ChEBI" id="CHEBI:30616"/>
    </ligand>
</feature>
<feature type="binding site" evidence="1">
    <location>
        <begin position="87"/>
        <end position="91"/>
    </location>
    <ligand>
        <name>ATP</name>
        <dbReference type="ChEBI" id="CHEBI:30616"/>
    </ligand>
</feature>
<feature type="binding site" evidence="1">
    <location>
        <position position="415"/>
    </location>
    <ligand>
        <name>ATP</name>
        <dbReference type="ChEBI" id="CHEBI:30616"/>
    </ligand>
</feature>
<feature type="binding site" evidence="1">
    <location>
        <position position="496"/>
    </location>
    <ligand>
        <name>ATP</name>
        <dbReference type="ChEBI" id="CHEBI:30616"/>
    </ligand>
</feature>
<proteinExistence type="inferred from homology"/>
<comment type="function">
    <text evidence="1">Together with its co-chaperonin GroES, plays an essential role in assisting protein folding. The GroEL-GroES system forms a nano-cage that allows encapsulation of the non-native substrate proteins and provides a physical environment optimized to promote and accelerate protein folding.</text>
</comment>
<comment type="catalytic activity">
    <reaction evidence="1">
        <text>ATP + H2O + a folded polypeptide = ADP + phosphate + an unfolded polypeptide.</text>
        <dbReference type="EC" id="5.6.1.7"/>
    </reaction>
</comment>
<comment type="subunit">
    <text evidence="1">Forms a cylinder of 14 subunits composed of two heptameric rings stacked back-to-back. Interacts with the co-chaperonin GroES.</text>
</comment>
<comment type="subcellular location">
    <subcellularLocation>
        <location evidence="1">Cytoplasm</location>
    </subcellularLocation>
</comment>
<comment type="similarity">
    <text evidence="1">Belongs to the chaperonin (HSP60) family.</text>
</comment>
<evidence type="ECO:0000255" key="1">
    <source>
        <dbReference type="HAMAP-Rule" id="MF_00600"/>
    </source>
</evidence>
<reference key="1">
    <citation type="submission" date="2007-06" db="EMBL/GenBank/DDBJ databases">
        <title>Complete sequence of Sinorhizobium medicae WSM419 chromosome.</title>
        <authorList>
            <consortium name="US DOE Joint Genome Institute"/>
            <person name="Copeland A."/>
            <person name="Lucas S."/>
            <person name="Lapidus A."/>
            <person name="Barry K."/>
            <person name="Glavina del Rio T."/>
            <person name="Dalin E."/>
            <person name="Tice H."/>
            <person name="Pitluck S."/>
            <person name="Chain P."/>
            <person name="Malfatti S."/>
            <person name="Shin M."/>
            <person name="Vergez L."/>
            <person name="Schmutz J."/>
            <person name="Larimer F."/>
            <person name="Land M."/>
            <person name="Hauser L."/>
            <person name="Kyrpides N."/>
            <person name="Mikhailova N."/>
            <person name="Reeve W.G."/>
            <person name="Richardson P."/>
        </authorList>
    </citation>
    <scope>NUCLEOTIDE SEQUENCE [LARGE SCALE GENOMIC DNA]</scope>
    <source>
        <strain>WSM419</strain>
    </source>
</reference>
<sequence length="542" mass="58016">MAAKEVKFQADARERMLRGVDVLANAVKVTLGPKGRNVVIDKSFGAPRITKDGVSVAKEIELEDKFENMGAQMLREVASKTNDLAGDGTTTATVLAQAIVREGAKAIASGMNPMDLKRGIDLAVDAVVKELKSNARKISQNSEIAQVGTISANGDTEIGRYLAEAMEKVGNEGVITVEEAKTSDTELEVVEGMQFDRGYLSPYFVTNQDKMRVELEDPYILIHEKKLSNLQSILPVLEAVVQSGKPLLIIAEDVEGEALATLVVNKLRGGLKVAAVKAPGFGDRRKAMLEDIAILTGGTVVSEDLGIMLENVTLEMLGRAKKVSIEKENTTIIDGAGSKTEIEGRTAQIRAQIEETTSDYDREKLQERLAKLAGGVAVIRVGGSTEVEVKEKKDRVDDALHATRAAVEEGILPGGGIALLRAVNALDGLKTANDDQRVGIEIVRRAIEAPVRQIAENAGAEGSIIVGKLREKVEFSYGWNAQTNEYGDLYTMGVIDPVKVVRTALQDAASVAGLLVTTEAMIAEKPKKESTPALPAGGGMDF</sequence>
<gene>
    <name evidence="1" type="primary">groEL3</name>
    <name evidence="1" type="synonym">groL3</name>
    <name type="ordered locus">Smed_1281</name>
</gene>
<organism>
    <name type="scientific">Sinorhizobium medicae (strain WSM419)</name>
    <name type="common">Ensifer medicae</name>
    <dbReference type="NCBI Taxonomy" id="366394"/>
    <lineage>
        <taxon>Bacteria</taxon>
        <taxon>Pseudomonadati</taxon>
        <taxon>Pseudomonadota</taxon>
        <taxon>Alphaproteobacteria</taxon>
        <taxon>Hyphomicrobiales</taxon>
        <taxon>Rhizobiaceae</taxon>
        <taxon>Sinorhizobium/Ensifer group</taxon>
        <taxon>Sinorhizobium</taxon>
    </lineage>
</organism>
<name>CH603_SINMW</name>
<accession>A6U901</accession>